<gene>
    <name type="primary">mrtB</name>
    <name type="ordered locus">MJ0081</name>
</gene>
<keyword id="KW-0484">Methanogenesis</keyword>
<keyword id="KW-1185">Reference proteome</keyword>
<keyword id="KW-0808">Transferase</keyword>
<name>MCRY_METJA</name>
<protein>
    <recommendedName>
        <fullName>Methyl-coenzyme M reductase II subunit beta</fullName>
        <shortName>MCR II beta</shortName>
        <ecNumber evidence="1">2.8.4.1</ecNumber>
    </recommendedName>
    <alternativeName>
        <fullName>Coenzyme-B sulfoethylthiotransferase beta</fullName>
    </alternativeName>
</protein>
<reference key="1">
    <citation type="journal article" date="1996" name="Science">
        <title>Complete genome sequence of the methanogenic archaeon, Methanococcus jannaschii.</title>
        <authorList>
            <person name="Bult C.J."/>
            <person name="White O."/>
            <person name="Olsen G.J."/>
            <person name="Zhou L."/>
            <person name="Fleischmann R.D."/>
            <person name="Sutton G.G."/>
            <person name="Blake J.A."/>
            <person name="FitzGerald L.M."/>
            <person name="Clayton R.A."/>
            <person name="Gocayne J.D."/>
            <person name="Kerlavage A.R."/>
            <person name="Dougherty B.A."/>
            <person name="Tomb J.-F."/>
            <person name="Adams M.D."/>
            <person name="Reich C.I."/>
            <person name="Overbeek R."/>
            <person name="Kirkness E.F."/>
            <person name="Weinstock K.G."/>
            <person name="Merrick J.M."/>
            <person name="Glodek A."/>
            <person name="Scott J.L."/>
            <person name="Geoghagen N.S.M."/>
            <person name="Weidman J.F."/>
            <person name="Fuhrmann J.L."/>
            <person name="Nguyen D."/>
            <person name="Utterback T.R."/>
            <person name="Kelley J.M."/>
            <person name="Peterson J.D."/>
            <person name="Sadow P.W."/>
            <person name="Hanna M.C."/>
            <person name="Cotton M.D."/>
            <person name="Roberts K.M."/>
            <person name="Hurst M.A."/>
            <person name="Kaine B.P."/>
            <person name="Borodovsky M."/>
            <person name="Klenk H.-P."/>
            <person name="Fraser C.M."/>
            <person name="Smith H.O."/>
            <person name="Woese C.R."/>
            <person name="Venter J.C."/>
        </authorList>
    </citation>
    <scope>NUCLEOTIDE SEQUENCE [LARGE SCALE GENOMIC DNA]</scope>
    <source>
        <strain>ATCC 43067 / DSM 2661 / JAL-1 / JCM 10045 / NBRC 100440</strain>
    </source>
</reference>
<feature type="chain" id="PRO_0000147466" description="Methyl-coenzyme M reductase II subunit beta">
    <location>
        <begin position="1"/>
        <end position="447"/>
    </location>
</feature>
<feature type="binding site" evidence="1">
    <location>
        <position position="368"/>
    </location>
    <ligand>
        <name>coenzyme M</name>
        <dbReference type="ChEBI" id="CHEBI:58319"/>
    </ligand>
</feature>
<feature type="binding site" evidence="1">
    <location>
        <position position="370"/>
    </location>
    <ligand>
        <name>coenzyme B</name>
        <dbReference type="ChEBI" id="CHEBI:58596"/>
    </ligand>
</feature>
<proteinExistence type="inferred from homology"/>
<organism>
    <name type="scientific">Methanocaldococcus jannaschii (strain ATCC 43067 / DSM 2661 / JAL-1 / JCM 10045 / NBRC 100440)</name>
    <name type="common">Methanococcus jannaschii</name>
    <dbReference type="NCBI Taxonomy" id="243232"/>
    <lineage>
        <taxon>Archaea</taxon>
        <taxon>Methanobacteriati</taxon>
        <taxon>Methanobacteriota</taxon>
        <taxon>Methanomada group</taxon>
        <taxon>Methanococci</taxon>
        <taxon>Methanococcales</taxon>
        <taxon>Methanocaldococcaceae</taxon>
        <taxon>Methanocaldococcus</taxon>
    </lineage>
</organism>
<comment type="function">
    <text evidence="1">Component of the methyl-coenzyme M reductase (MCR) I that catalyzes the reductive cleavage of methyl-coenzyme M (CoM-S-CH3 or 2-(methylthio)ethanesulfonate) using coenzyme B (CoB or 7-mercaptoheptanoylthreonine phosphate) as reductant which results in the production of methane and the mixed heterodisulfide of CoB and CoM (CoM-S-S-CoB). This is the final step in methanogenesis.</text>
</comment>
<comment type="catalytic activity">
    <reaction evidence="1">
        <text>coenzyme B + methyl-coenzyme M = methane + coenzyme M-coenzyme B heterodisulfide</text>
        <dbReference type="Rhea" id="RHEA:12532"/>
        <dbReference type="ChEBI" id="CHEBI:16183"/>
        <dbReference type="ChEBI" id="CHEBI:58286"/>
        <dbReference type="ChEBI" id="CHEBI:58411"/>
        <dbReference type="ChEBI" id="CHEBI:58596"/>
        <dbReference type="EC" id="2.8.4.1"/>
    </reaction>
    <physiologicalReaction direction="left-to-right" evidence="1">
        <dbReference type="Rhea" id="RHEA:12533"/>
    </physiologicalReaction>
</comment>
<comment type="cofactor">
    <cofactor evidence="1">
        <name>coenzyme F430</name>
        <dbReference type="ChEBI" id="CHEBI:60540"/>
    </cofactor>
    <text evidence="1">Binds 2 coenzyme F430 non-covalently per MCR complex. Coenzyme F430 is a yellow nickel porphinoid. Methyl-coenzyme-M reductase is activated when the enzyme-bound coenzyme F430 is reduced to the Ni(I) oxidation state.</text>
</comment>
<comment type="pathway">
    <text evidence="1">One-carbon metabolism; methyl-coenzyme M reduction; methane from methyl-coenzyme M: step 1/1.</text>
</comment>
<comment type="subunit">
    <text evidence="1">MCR is a hexamer of two alpha, two beta, and two gamma chains, forming a dimer of heterotrimers.</text>
</comment>
<comment type="similarity">
    <text evidence="2">Belongs to the methyl-coenzyme M reductase beta subunit family.</text>
</comment>
<dbReference type="EC" id="2.8.4.1" evidence="1"/>
<dbReference type="EMBL" id="L77117">
    <property type="protein sequence ID" value="AAB98061.1"/>
    <property type="molecule type" value="Genomic_DNA"/>
</dbReference>
<dbReference type="RefSeq" id="WP_010869573.1">
    <property type="nucleotide sequence ID" value="NC_000909.1"/>
</dbReference>
<dbReference type="SMR" id="Q60390"/>
<dbReference type="FunCoup" id="Q60390">
    <property type="interactions" value="91"/>
</dbReference>
<dbReference type="STRING" id="243232.MJ_0081"/>
<dbReference type="PaxDb" id="243232-MJ_0081"/>
<dbReference type="EnsemblBacteria" id="AAB98061">
    <property type="protein sequence ID" value="AAB98061"/>
    <property type="gene ID" value="MJ_0081"/>
</dbReference>
<dbReference type="GeneID" id="1450920"/>
<dbReference type="KEGG" id="mja:MJ_0081"/>
<dbReference type="eggNOG" id="arCOG04860">
    <property type="taxonomic scope" value="Archaea"/>
</dbReference>
<dbReference type="HOGENOM" id="CLU_617682_0_0_2"/>
<dbReference type="InParanoid" id="Q60390"/>
<dbReference type="OrthoDB" id="52873at2157"/>
<dbReference type="PhylomeDB" id="Q60390"/>
<dbReference type="UniPathway" id="UPA00646">
    <property type="reaction ID" value="UER00699"/>
</dbReference>
<dbReference type="Proteomes" id="UP000000805">
    <property type="component" value="Chromosome"/>
</dbReference>
<dbReference type="GO" id="GO:0050524">
    <property type="term" value="F:coenzyme-B sulfoethylthiotransferase activity"/>
    <property type="evidence" value="ECO:0007669"/>
    <property type="project" value="UniProtKB-EC"/>
</dbReference>
<dbReference type="GO" id="GO:0015948">
    <property type="term" value="P:methanogenesis"/>
    <property type="evidence" value="ECO:0007669"/>
    <property type="project" value="UniProtKB-KW"/>
</dbReference>
<dbReference type="Gene3D" id="3.30.70.470">
    <property type="match status" value="1"/>
</dbReference>
<dbReference type="Gene3D" id="1.20.840.10">
    <property type="entry name" value="Methyl-coenzyme M reductase, alpha/beta subunit, C-terminal"/>
    <property type="match status" value="1"/>
</dbReference>
<dbReference type="InterPro" id="IPR008924">
    <property type="entry name" value="Me_CoM_Rdtase_asu/bsu_C"/>
</dbReference>
<dbReference type="InterPro" id="IPR015823">
    <property type="entry name" value="Me_CoM_Rdtase_asu_N_sub2"/>
</dbReference>
<dbReference type="InterPro" id="IPR003179">
    <property type="entry name" value="Me_CoM_Rdtase_bsu"/>
</dbReference>
<dbReference type="InterPro" id="IPR022679">
    <property type="entry name" value="Me_CoM_Rdtase_bsu_C"/>
</dbReference>
<dbReference type="InterPro" id="IPR022680">
    <property type="entry name" value="Me_CoM_Rdtase_bsu_N"/>
</dbReference>
<dbReference type="InterPro" id="IPR009024">
    <property type="entry name" value="Me_CoM_Rdtase_Fd-like_fold"/>
</dbReference>
<dbReference type="NCBIfam" id="TIGR03257">
    <property type="entry name" value="met_CoM_red_bet"/>
    <property type="match status" value="1"/>
</dbReference>
<dbReference type="Pfam" id="PF02241">
    <property type="entry name" value="MCR_beta"/>
    <property type="match status" value="1"/>
</dbReference>
<dbReference type="Pfam" id="PF02783">
    <property type="entry name" value="MCR_beta_N"/>
    <property type="match status" value="1"/>
</dbReference>
<dbReference type="PIRSF" id="PIRSF000263">
    <property type="entry name" value="Meth_CoM_rd_beta"/>
    <property type="match status" value="1"/>
</dbReference>
<dbReference type="SUPFAM" id="SSF48081">
    <property type="entry name" value="Methyl-coenzyme M reductase alpha and beta chain C-terminal domain"/>
    <property type="match status" value="1"/>
</dbReference>
<dbReference type="SUPFAM" id="SSF55088">
    <property type="entry name" value="Methyl-coenzyme M reductase subunits"/>
    <property type="match status" value="1"/>
</dbReference>
<sequence>MLHYEDRIDLYDERGKLLEENVPLEAISPLKNPTIEKIVNDIKRSVAINLAGIENALKTGAVGGKACFCPGRELDLPIVENAEIIAEKIKRMVQIEEDDDTVVKLINGGKQLLLQLPSKRLRVAADYTVSALIGGGATVQAIVDAFDVDMFDAPVVKTAVMGRYPQTVDFHGANIATLLGPPVLLEGLGYGLRNIMANHIVAVTRKKTLNAVALASILEQTAMFETGDALGAFERLHLLGLAFQGLNANNLTYELVKENGKDGTVGTVVASVVERALEDGVIRPLKTMPSGFTVYEPVDWALWNAYAASGLVAAVIVNVGAARAAQGVASTVLYYNDILEYETGLPSVDFGRAEGTAVGFSFFSHSIYGGGGPGTFHGNHVVTRHSKGFAIPCAAAAMCLDAGTQMFSVERTSALVGTVYSAIDHLREPLKYVAEGAVEVKEKEKVI</sequence>
<accession>Q60390</accession>
<evidence type="ECO:0000250" key="1">
    <source>
        <dbReference type="UniProtKB" id="P11560"/>
    </source>
</evidence>
<evidence type="ECO:0000305" key="2"/>